<accession>P57512</accession>
<proteinExistence type="inferred from homology"/>
<comment type="catalytic activity">
    <reaction>
        <text>tRNA(Lys) + L-lysine + ATP = L-lysyl-tRNA(Lys) + AMP + diphosphate</text>
        <dbReference type="Rhea" id="RHEA:20792"/>
        <dbReference type="Rhea" id="RHEA-COMP:9696"/>
        <dbReference type="Rhea" id="RHEA-COMP:9697"/>
        <dbReference type="ChEBI" id="CHEBI:30616"/>
        <dbReference type="ChEBI" id="CHEBI:32551"/>
        <dbReference type="ChEBI" id="CHEBI:33019"/>
        <dbReference type="ChEBI" id="CHEBI:78442"/>
        <dbReference type="ChEBI" id="CHEBI:78529"/>
        <dbReference type="ChEBI" id="CHEBI:456215"/>
        <dbReference type="EC" id="6.1.1.6"/>
    </reaction>
</comment>
<comment type="cofactor">
    <cofactor evidence="1">
        <name>Mg(2+)</name>
        <dbReference type="ChEBI" id="CHEBI:18420"/>
    </cofactor>
    <text evidence="1">Binds 3 Mg(2+) ions per subunit.</text>
</comment>
<comment type="subunit">
    <text evidence="1">Homodimer.</text>
</comment>
<comment type="subcellular location">
    <subcellularLocation>
        <location evidence="1">Cytoplasm</location>
    </subcellularLocation>
</comment>
<comment type="similarity">
    <text evidence="2">Belongs to the class-II aminoacyl-tRNA synthetase family.</text>
</comment>
<feature type="chain" id="PRO_0000152605" description="Lysine--tRNA ligase">
    <location>
        <begin position="1"/>
        <end position="506"/>
    </location>
</feature>
<feature type="binding site" evidence="1">
    <location>
        <position position="415"/>
    </location>
    <ligand>
        <name>Mg(2+)</name>
        <dbReference type="ChEBI" id="CHEBI:18420"/>
        <label>1</label>
    </ligand>
</feature>
<feature type="binding site" evidence="1">
    <location>
        <position position="422"/>
    </location>
    <ligand>
        <name>Mg(2+)</name>
        <dbReference type="ChEBI" id="CHEBI:18420"/>
        <label>1</label>
    </ligand>
</feature>
<feature type="binding site" evidence="1">
    <location>
        <position position="422"/>
    </location>
    <ligand>
        <name>Mg(2+)</name>
        <dbReference type="ChEBI" id="CHEBI:18420"/>
        <label>2</label>
    </ligand>
</feature>
<reference key="1">
    <citation type="journal article" date="2000" name="Nature">
        <title>Genome sequence of the endocellular bacterial symbiont of aphids Buchnera sp. APS.</title>
        <authorList>
            <person name="Shigenobu S."/>
            <person name="Watanabe H."/>
            <person name="Hattori M."/>
            <person name="Sakaki Y."/>
            <person name="Ishikawa H."/>
        </authorList>
    </citation>
    <scope>NUCLEOTIDE SEQUENCE [LARGE SCALE GENOMIC DNA]</scope>
    <source>
        <strain>APS</strain>
    </source>
</reference>
<gene>
    <name type="primary">lysS</name>
    <name type="ordered locus">BU437</name>
</gene>
<organism>
    <name type="scientific">Buchnera aphidicola subsp. Acyrthosiphon pisum (strain APS)</name>
    <name type="common">Acyrthosiphon pisum symbiotic bacterium</name>
    <dbReference type="NCBI Taxonomy" id="107806"/>
    <lineage>
        <taxon>Bacteria</taxon>
        <taxon>Pseudomonadati</taxon>
        <taxon>Pseudomonadota</taxon>
        <taxon>Gammaproteobacteria</taxon>
        <taxon>Enterobacterales</taxon>
        <taxon>Erwiniaceae</taxon>
        <taxon>Buchnera</taxon>
    </lineage>
</organism>
<keyword id="KW-0030">Aminoacyl-tRNA synthetase</keyword>
<keyword id="KW-0067">ATP-binding</keyword>
<keyword id="KW-0963">Cytoplasm</keyword>
<keyword id="KW-0436">Ligase</keyword>
<keyword id="KW-0460">Magnesium</keyword>
<keyword id="KW-0479">Metal-binding</keyword>
<keyword id="KW-0547">Nucleotide-binding</keyword>
<keyword id="KW-0648">Protein biosynthesis</keyword>
<keyword id="KW-1185">Reference proteome</keyword>
<dbReference type="EC" id="6.1.1.6"/>
<dbReference type="EMBL" id="BA000003">
    <property type="protein sequence ID" value="BAB13135.1"/>
    <property type="molecule type" value="Genomic_DNA"/>
</dbReference>
<dbReference type="RefSeq" id="NP_240249.1">
    <property type="nucleotide sequence ID" value="NC_002528.1"/>
</dbReference>
<dbReference type="RefSeq" id="WP_009874390.1">
    <property type="nucleotide sequence ID" value="NC_002528.1"/>
</dbReference>
<dbReference type="SMR" id="P57512"/>
<dbReference type="STRING" id="563178.BUAP5A_430"/>
<dbReference type="EnsemblBacteria" id="BAB13135">
    <property type="protein sequence ID" value="BAB13135"/>
    <property type="gene ID" value="BAB13135"/>
</dbReference>
<dbReference type="KEGG" id="buc:BU437"/>
<dbReference type="PATRIC" id="fig|107806.10.peg.446"/>
<dbReference type="eggNOG" id="COG1190">
    <property type="taxonomic scope" value="Bacteria"/>
</dbReference>
<dbReference type="HOGENOM" id="CLU_008255_6_2_6"/>
<dbReference type="Proteomes" id="UP000001806">
    <property type="component" value="Chromosome"/>
</dbReference>
<dbReference type="GO" id="GO:0005829">
    <property type="term" value="C:cytosol"/>
    <property type="evidence" value="ECO:0007669"/>
    <property type="project" value="TreeGrafter"/>
</dbReference>
<dbReference type="GO" id="GO:0005524">
    <property type="term" value="F:ATP binding"/>
    <property type="evidence" value="ECO:0007669"/>
    <property type="project" value="UniProtKB-UniRule"/>
</dbReference>
<dbReference type="GO" id="GO:0004824">
    <property type="term" value="F:lysine-tRNA ligase activity"/>
    <property type="evidence" value="ECO:0007669"/>
    <property type="project" value="UniProtKB-UniRule"/>
</dbReference>
<dbReference type="GO" id="GO:0000287">
    <property type="term" value="F:magnesium ion binding"/>
    <property type="evidence" value="ECO:0007669"/>
    <property type="project" value="UniProtKB-UniRule"/>
</dbReference>
<dbReference type="GO" id="GO:0000049">
    <property type="term" value="F:tRNA binding"/>
    <property type="evidence" value="ECO:0007669"/>
    <property type="project" value="TreeGrafter"/>
</dbReference>
<dbReference type="GO" id="GO:0006430">
    <property type="term" value="P:lysyl-tRNA aminoacylation"/>
    <property type="evidence" value="ECO:0007669"/>
    <property type="project" value="UniProtKB-UniRule"/>
</dbReference>
<dbReference type="CDD" id="cd00775">
    <property type="entry name" value="LysRS_core"/>
    <property type="match status" value="1"/>
</dbReference>
<dbReference type="CDD" id="cd04322">
    <property type="entry name" value="LysRS_N"/>
    <property type="match status" value="1"/>
</dbReference>
<dbReference type="FunFam" id="2.40.50.140:FF:000024">
    <property type="entry name" value="Lysine--tRNA ligase"/>
    <property type="match status" value="1"/>
</dbReference>
<dbReference type="Gene3D" id="3.30.930.10">
    <property type="entry name" value="Bira Bifunctional Protein, Domain 2"/>
    <property type="match status" value="1"/>
</dbReference>
<dbReference type="Gene3D" id="2.40.50.140">
    <property type="entry name" value="Nucleic acid-binding proteins"/>
    <property type="match status" value="1"/>
</dbReference>
<dbReference type="HAMAP" id="MF_00252">
    <property type="entry name" value="Lys_tRNA_synth_class2"/>
    <property type="match status" value="1"/>
</dbReference>
<dbReference type="InterPro" id="IPR004364">
    <property type="entry name" value="Aa-tRNA-synt_II"/>
</dbReference>
<dbReference type="InterPro" id="IPR006195">
    <property type="entry name" value="aa-tRNA-synth_II"/>
</dbReference>
<dbReference type="InterPro" id="IPR045864">
    <property type="entry name" value="aa-tRNA-synth_II/BPL/LPL"/>
</dbReference>
<dbReference type="InterPro" id="IPR002313">
    <property type="entry name" value="Lys-tRNA-ligase_II"/>
</dbReference>
<dbReference type="InterPro" id="IPR044136">
    <property type="entry name" value="Lys-tRNA-ligase_II_N"/>
</dbReference>
<dbReference type="InterPro" id="IPR018149">
    <property type="entry name" value="Lys-tRNA-synth_II_C"/>
</dbReference>
<dbReference type="InterPro" id="IPR012340">
    <property type="entry name" value="NA-bd_OB-fold"/>
</dbReference>
<dbReference type="InterPro" id="IPR004365">
    <property type="entry name" value="NA-bd_OB_tRNA"/>
</dbReference>
<dbReference type="NCBIfam" id="TIGR00499">
    <property type="entry name" value="lysS_bact"/>
    <property type="match status" value="1"/>
</dbReference>
<dbReference type="NCBIfam" id="NF001756">
    <property type="entry name" value="PRK00484.1"/>
    <property type="match status" value="1"/>
</dbReference>
<dbReference type="PANTHER" id="PTHR42918:SF15">
    <property type="entry name" value="LYSINE--TRNA LIGASE, CHLOROPLASTIC_MITOCHONDRIAL"/>
    <property type="match status" value="1"/>
</dbReference>
<dbReference type="PANTHER" id="PTHR42918">
    <property type="entry name" value="LYSYL-TRNA SYNTHETASE"/>
    <property type="match status" value="1"/>
</dbReference>
<dbReference type="Pfam" id="PF00152">
    <property type="entry name" value="tRNA-synt_2"/>
    <property type="match status" value="1"/>
</dbReference>
<dbReference type="Pfam" id="PF01336">
    <property type="entry name" value="tRNA_anti-codon"/>
    <property type="match status" value="1"/>
</dbReference>
<dbReference type="PRINTS" id="PR00982">
    <property type="entry name" value="TRNASYNTHLYS"/>
</dbReference>
<dbReference type="SUPFAM" id="SSF55681">
    <property type="entry name" value="Class II aaRS and biotin synthetases"/>
    <property type="match status" value="1"/>
</dbReference>
<dbReference type="SUPFAM" id="SSF50249">
    <property type="entry name" value="Nucleic acid-binding proteins"/>
    <property type="match status" value="1"/>
</dbReference>
<dbReference type="PROSITE" id="PS50862">
    <property type="entry name" value="AA_TRNA_LIGASE_II"/>
    <property type="match status" value="1"/>
</dbReference>
<sequence>MSEIEKRNHGDCNILYKEIKKREQKLVNMKKEGFSFPNSFKKNTTSRKIYQKYQTKNRNELISLNIEVSIAGRMVQRRIMGKASFFTLQDIEGKIQIYINEKKISSDFYRFHFKKWDIGDILGVIGTLFKTKTGELSIYCKNVTILNKSLKPLPDKFHGLSNQEIRYRKRYLDLISNNKLYSIFKNRSNIITAIRNFMIENDFLEVETPMLQNIPGGANARPFITYHNEIDSQMYLRIAPELYLKKLIIGGFERIFELNRNFRNEGVSARHNPEFTMMEAYIAYSNYEDMMELTENLFKSITKFLFQDNKIIFNNNNFDFSQPFRRLTMTDSILEFNSTITSSDLKDFYKIREFAKSIGIKVEKKWGCGQIETEIFEKTVEKKLIQPTFITQYPVEVSPLARRNDINLNITDRFELFIGGYEIGNGFSELNDVEDQKTRFLNQIQKSNKEDNKNLFYDKEYIEALKYGLPPTSGLGIGIDRLIMILTNQISIRDVILFPTLRPFKK</sequence>
<evidence type="ECO:0000250" key="1"/>
<evidence type="ECO:0000305" key="2"/>
<name>SYK_BUCAI</name>
<protein>
    <recommendedName>
        <fullName>Lysine--tRNA ligase</fullName>
        <ecNumber>6.1.1.6</ecNumber>
    </recommendedName>
    <alternativeName>
        <fullName>Lysyl-tRNA synthetase</fullName>
        <shortName>LysRS</shortName>
    </alternativeName>
</protein>